<proteinExistence type="evidence at transcript level"/>
<protein>
    <recommendedName>
        <fullName>Piwi-like protein 1</fullName>
        <ecNumber evidence="2">3.1.26.-</ecNumber>
    </recommendedName>
</protein>
<accession>A6N7Y9</accession>
<comment type="function">
    <text evidence="2">Endoribonuclease that plays a central role in postnatal germ cells by repressing transposable elements and preventing their mobilization, which is essential for the germline integrity. Acts via the piRNA metabolic process, which mediates the repression of transposable elements during meiosis by forming complexes composed of piRNAs and Piwi proteins and govern the methylation and subsequent repression of transposons. Directly binds methylated piRNAs, a class of 24 to 30 nucleotide RNAs that are generated by a Dicer-independent mechanism and are primarily derived from transposons and other repeated sequence elements. Strongly prefers a uridine in the first position of their guide (g1U preference, also named 1U-bias). Besides their function in transposable elements repression, piRNAs are probably involved in other processes during meiosis such as translation regulation. Not involved in the piRNA amplification loop, also named ping-pong amplification cycle. Acts as an endoribonuclease that cleaves transposon messenger RNAs (By similarity).</text>
</comment>
<comment type="cofactor">
    <cofactor evidence="2">
        <name>Mg(2+)</name>
        <dbReference type="ChEBI" id="CHEBI:18420"/>
    </cofactor>
</comment>
<comment type="subcellular location">
    <subcellularLocation>
        <location evidence="2">Cytoplasm</location>
    </subcellularLocation>
    <text evidence="2">Component of the meiotic nuage, also named P granule, a germ-cell-specific organelle required to repress transposon activity during meiosis.</text>
</comment>
<comment type="domain">
    <text evidence="2">The PAZ domain specifically recognizes binds the 2'-O-methylated 3'-end of piRNAs. The MID region is required for recognition of uridine in the first position of piRNAs (g1U preference, also named 1U-bias).</text>
</comment>
<comment type="PTM">
    <text evidence="2">Methylated on arginine residues; required for the interaction with Tudor domain-containing protein and subsequent localization to the meiotic nuage, also named P granule.</text>
</comment>
<comment type="similarity">
    <text evidence="6">Belongs to the argonaute family. Piwi subfamily.</text>
</comment>
<gene>
    <name type="primary">PIWIL1</name>
</gene>
<dbReference type="EC" id="3.1.26.-" evidence="2"/>
<dbReference type="EMBL" id="EF619343">
    <property type="protein sequence ID" value="ABR09543.1"/>
    <property type="molecule type" value="mRNA"/>
</dbReference>
<dbReference type="RefSeq" id="NP_001092322.1">
    <property type="nucleotide sequence ID" value="NM_001098852.2"/>
</dbReference>
<dbReference type="RefSeq" id="XP_015130744.1">
    <property type="nucleotide sequence ID" value="XM_015275258.1"/>
</dbReference>
<dbReference type="RefSeq" id="XP_015130745.1">
    <property type="nucleotide sequence ID" value="XM_015275259.1"/>
</dbReference>
<dbReference type="RefSeq" id="XP_015130746.1">
    <property type="nucleotide sequence ID" value="XM_015275260.1"/>
</dbReference>
<dbReference type="RefSeq" id="XP_015130747.1">
    <property type="nucleotide sequence ID" value="XM_015275261.1"/>
</dbReference>
<dbReference type="RefSeq" id="XP_015130748.1">
    <property type="nucleotide sequence ID" value="XM_015275262.1"/>
</dbReference>
<dbReference type="RefSeq" id="XP_015130749.1">
    <property type="nucleotide sequence ID" value="XM_015275263.1"/>
</dbReference>
<dbReference type="RefSeq" id="XP_046757079.1">
    <property type="nucleotide sequence ID" value="XM_046901123.1"/>
</dbReference>
<dbReference type="RefSeq" id="XP_046784068.1">
    <property type="nucleotide sequence ID" value="XM_046928112.1"/>
</dbReference>
<dbReference type="SMR" id="A6N7Y9"/>
<dbReference type="FunCoup" id="A6N7Y9">
    <property type="interactions" value="25"/>
</dbReference>
<dbReference type="STRING" id="9031.ENSGALP00000004162"/>
<dbReference type="GlyGen" id="A6N7Y9">
    <property type="glycosylation" value="1 site"/>
</dbReference>
<dbReference type="PaxDb" id="9031-ENSGALP00000004162"/>
<dbReference type="Ensembl" id="ENSGALT00010056677.1">
    <property type="protein sequence ID" value="ENSGALP00010034419.1"/>
    <property type="gene ID" value="ENSGALG00010023240.1"/>
</dbReference>
<dbReference type="GeneID" id="416804"/>
<dbReference type="KEGG" id="gga:416804"/>
<dbReference type="CTD" id="9271"/>
<dbReference type="VEuPathDB" id="HostDB:geneid_416804"/>
<dbReference type="eggNOG" id="KOG1042">
    <property type="taxonomic scope" value="Eukaryota"/>
</dbReference>
<dbReference type="GeneTree" id="ENSGT00950000183200"/>
<dbReference type="HOGENOM" id="CLU_008813_0_0_1"/>
<dbReference type="InParanoid" id="A6N7Y9"/>
<dbReference type="OMA" id="RRDFHDT"/>
<dbReference type="OrthoDB" id="445936at2759"/>
<dbReference type="PhylomeDB" id="A6N7Y9"/>
<dbReference type="PRO" id="PR:A6N7Y9"/>
<dbReference type="Proteomes" id="UP000000539">
    <property type="component" value="Chromosome 15"/>
</dbReference>
<dbReference type="Bgee" id="ENSGALG00000002645">
    <property type="expression patterns" value="Expressed in spermatid and 6 other cell types or tissues"/>
</dbReference>
<dbReference type="GO" id="GO:0033391">
    <property type="term" value="C:chromatoid body"/>
    <property type="evidence" value="ECO:0007669"/>
    <property type="project" value="Ensembl"/>
</dbReference>
<dbReference type="GO" id="GO:0005737">
    <property type="term" value="C:cytoplasm"/>
    <property type="evidence" value="ECO:0000250"/>
    <property type="project" value="UniProtKB"/>
</dbReference>
<dbReference type="GO" id="GO:0097433">
    <property type="term" value="C:dense body"/>
    <property type="evidence" value="ECO:0007669"/>
    <property type="project" value="Ensembl"/>
</dbReference>
<dbReference type="GO" id="GO:0005634">
    <property type="term" value="C:nucleus"/>
    <property type="evidence" value="ECO:0000318"/>
    <property type="project" value="GO_Central"/>
</dbReference>
<dbReference type="GO" id="GO:0043186">
    <property type="term" value="C:P granule"/>
    <property type="evidence" value="ECO:0000250"/>
    <property type="project" value="UniProtKB"/>
</dbReference>
<dbReference type="GO" id="GO:0046872">
    <property type="term" value="F:metal ion binding"/>
    <property type="evidence" value="ECO:0007669"/>
    <property type="project" value="UniProtKB-KW"/>
</dbReference>
<dbReference type="GO" id="GO:0003729">
    <property type="term" value="F:mRNA binding"/>
    <property type="evidence" value="ECO:0000250"/>
    <property type="project" value="UniProtKB"/>
</dbReference>
<dbReference type="GO" id="GO:0140262">
    <property type="term" value="F:mRNA cap binding complex binding"/>
    <property type="evidence" value="ECO:0007669"/>
    <property type="project" value="Ensembl"/>
</dbReference>
<dbReference type="GO" id="GO:0034584">
    <property type="term" value="F:piRNA binding"/>
    <property type="evidence" value="ECO:0000250"/>
    <property type="project" value="UniProtKB"/>
</dbReference>
<dbReference type="GO" id="GO:0019901">
    <property type="term" value="F:protein kinase binding"/>
    <property type="evidence" value="ECO:0007669"/>
    <property type="project" value="Ensembl"/>
</dbReference>
<dbReference type="GO" id="GO:0004521">
    <property type="term" value="F:RNA endonuclease activity"/>
    <property type="evidence" value="ECO:0000250"/>
    <property type="project" value="UniProtKB"/>
</dbReference>
<dbReference type="GO" id="GO:0003727">
    <property type="term" value="F:single-stranded RNA binding"/>
    <property type="evidence" value="ECO:0007669"/>
    <property type="project" value="Ensembl"/>
</dbReference>
<dbReference type="GO" id="GO:0051321">
    <property type="term" value="P:meiotic cell cycle"/>
    <property type="evidence" value="ECO:0007669"/>
    <property type="project" value="UniProtKB-KW"/>
</dbReference>
<dbReference type="GO" id="GO:0034587">
    <property type="term" value="P:piRNA processing"/>
    <property type="evidence" value="ECO:0000318"/>
    <property type="project" value="GO_Central"/>
</dbReference>
<dbReference type="GO" id="GO:0140991">
    <property type="term" value="P:piRNA-mediated gene silencing by mRNA destabilization"/>
    <property type="evidence" value="ECO:0007669"/>
    <property type="project" value="Ensembl"/>
</dbReference>
<dbReference type="GO" id="GO:0140990">
    <property type="term" value="P:primary piRNA processing"/>
    <property type="evidence" value="ECO:0000250"/>
    <property type="project" value="UniProtKB"/>
</dbReference>
<dbReference type="GO" id="GO:2000765">
    <property type="term" value="P:regulation of cytoplasmic translation"/>
    <property type="evidence" value="ECO:0000250"/>
    <property type="project" value="UniProtKB"/>
</dbReference>
<dbReference type="GO" id="GO:0031047">
    <property type="term" value="P:regulatory ncRNA-mediated gene silencing"/>
    <property type="evidence" value="ECO:0000250"/>
    <property type="project" value="UniProtKB"/>
</dbReference>
<dbReference type="GO" id="GO:0035092">
    <property type="term" value="P:sperm DNA condensation"/>
    <property type="evidence" value="ECO:0000250"/>
    <property type="project" value="UniProtKB"/>
</dbReference>
<dbReference type="GO" id="GO:0007286">
    <property type="term" value="P:spermatid development"/>
    <property type="evidence" value="ECO:0000250"/>
    <property type="project" value="UniProtKB"/>
</dbReference>
<dbReference type="GO" id="GO:0007283">
    <property type="term" value="P:spermatogenesis"/>
    <property type="evidence" value="ECO:0000250"/>
    <property type="project" value="UniProtKB"/>
</dbReference>
<dbReference type="GO" id="GO:0141006">
    <property type="term" value="P:transposable element silencing by piRNA-mediated heterochromatin formation"/>
    <property type="evidence" value="ECO:0000250"/>
    <property type="project" value="UniProtKB"/>
</dbReference>
<dbReference type="CDD" id="cd02845">
    <property type="entry name" value="PAZ_piwi_like"/>
    <property type="match status" value="1"/>
</dbReference>
<dbReference type="CDD" id="cd04658">
    <property type="entry name" value="Piwi_piwi-like_Euk"/>
    <property type="match status" value="1"/>
</dbReference>
<dbReference type="FunFam" id="3.30.420.10:FF:000014">
    <property type="entry name" value="Piwi-like RNA-mediated gene silencing 1"/>
    <property type="match status" value="1"/>
</dbReference>
<dbReference type="FunFam" id="3.40.50.2300:FF:000131">
    <property type="entry name" value="Piwi-like RNA-mediated gene silencing 1"/>
    <property type="match status" value="1"/>
</dbReference>
<dbReference type="FunFam" id="2.170.260.10:FF:000003">
    <property type="entry name" value="Piwi-like RNA-mediated gene silencing 2"/>
    <property type="match status" value="1"/>
</dbReference>
<dbReference type="Gene3D" id="3.40.50.2300">
    <property type="match status" value="1"/>
</dbReference>
<dbReference type="Gene3D" id="2.170.260.10">
    <property type="entry name" value="paz domain"/>
    <property type="match status" value="1"/>
</dbReference>
<dbReference type="Gene3D" id="3.30.420.10">
    <property type="entry name" value="Ribonuclease H-like superfamily/Ribonuclease H"/>
    <property type="match status" value="1"/>
</dbReference>
<dbReference type="InterPro" id="IPR014811">
    <property type="entry name" value="ArgoL1"/>
</dbReference>
<dbReference type="InterPro" id="IPR031320">
    <property type="entry name" value="GAGE"/>
</dbReference>
<dbReference type="InterPro" id="IPR003100">
    <property type="entry name" value="PAZ_dom"/>
</dbReference>
<dbReference type="InterPro" id="IPR036085">
    <property type="entry name" value="PAZ_dom_sf"/>
</dbReference>
<dbReference type="InterPro" id="IPR003165">
    <property type="entry name" value="Piwi"/>
</dbReference>
<dbReference type="InterPro" id="IPR012337">
    <property type="entry name" value="RNaseH-like_sf"/>
</dbReference>
<dbReference type="InterPro" id="IPR036397">
    <property type="entry name" value="RNaseH_sf"/>
</dbReference>
<dbReference type="PANTHER" id="PTHR22891">
    <property type="entry name" value="EUKARYOTIC TRANSLATION INITIATION FACTOR 2C"/>
    <property type="match status" value="1"/>
</dbReference>
<dbReference type="Pfam" id="PF08699">
    <property type="entry name" value="ArgoL1"/>
    <property type="match status" value="1"/>
</dbReference>
<dbReference type="Pfam" id="PF05831">
    <property type="entry name" value="GAGE"/>
    <property type="match status" value="1"/>
</dbReference>
<dbReference type="Pfam" id="PF02170">
    <property type="entry name" value="PAZ"/>
    <property type="match status" value="1"/>
</dbReference>
<dbReference type="Pfam" id="PF02171">
    <property type="entry name" value="Piwi"/>
    <property type="match status" value="1"/>
</dbReference>
<dbReference type="Pfam" id="PF23278">
    <property type="entry name" value="Piwi_N"/>
    <property type="match status" value="1"/>
</dbReference>
<dbReference type="SMART" id="SM01379">
    <property type="entry name" value="GAGE"/>
    <property type="match status" value="1"/>
</dbReference>
<dbReference type="SMART" id="SM00949">
    <property type="entry name" value="PAZ"/>
    <property type="match status" value="1"/>
</dbReference>
<dbReference type="SMART" id="SM00950">
    <property type="entry name" value="Piwi"/>
    <property type="match status" value="1"/>
</dbReference>
<dbReference type="SUPFAM" id="SSF101690">
    <property type="entry name" value="PAZ domain"/>
    <property type="match status" value="1"/>
</dbReference>
<dbReference type="SUPFAM" id="SSF53098">
    <property type="entry name" value="Ribonuclease H-like"/>
    <property type="match status" value="1"/>
</dbReference>
<dbReference type="PROSITE" id="PS50821">
    <property type="entry name" value="PAZ"/>
    <property type="match status" value="1"/>
</dbReference>
<dbReference type="PROSITE" id="PS50822">
    <property type="entry name" value="PIWI"/>
    <property type="match status" value="1"/>
</dbReference>
<evidence type="ECO:0000250" key="1">
    <source>
        <dbReference type="UniProtKB" id="A8D8P8"/>
    </source>
</evidence>
<evidence type="ECO:0000250" key="2">
    <source>
        <dbReference type="UniProtKB" id="Q9JMB7"/>
    </source>
</evidence>
<evidence type="ECO:0000255" key="3">
    <source>
        <dbReference type="PROSITE-ProRule" id="PRU00142"/>
    </source>
</evidence>
<evidence type="ECO:0000255" key="4">
    <source>
        <dbReference type="PROSITE-ProRule" id="PRU00150"/>
    </source>
</evidence>
<evidence type="ECO:0000256" key="5">
    <source>
        <dbReference type="SAM" id="MobiDB-lite"/>
    </source>
</evidence>
<evidence type="ECO:0000305" key="6"/>
<sequence length="867" mass="99286">MTGRARARARGRPPGQEAAIPPVGAASAQKTLPSHPSEQRQSLQPCHPPPLTEEPGGRGRQRGPQDAPKTLGLQISAGFQELSLADRGGRRRDFHDLGVNTRQAIEHVRESKTGSSGAMIKLIANFFRLTSRPQWALYQYHVDYNPEMEARRLRSGLLFQHEDLIGKTHAFDGSILFLPKRLPNKVTEVYSKTRNGEDVRITITLTNELPPTSPTCLQFYNIIFRRLLKMMNFQQIGRNYYNPKDPVSIPNHRLMVWPGFTSSILQYEESIMLCADVSHKILRSETVLDFMYSLYEQVEERRFRDACAKELIGVIVLTKYNNRTYRVDDIDWDANPQCTFRRADGSEISYIDYYKRQYNQDISDLNQPVLISQYRRKRGNVTVGPVVLIPELCYLTGLTEKMRNDFNMMKDLAVHTRLSPEQRQREIGKLVDCMKKDECVQKELRDWGLSFDSSLLSFTGRVVQAEKILQAGNVFDYNPQFADWSRETRVAPLIHAKPLDNWLLIYTRRNYDAANMLLQNLFKVTPSMGIRMNKATMIEVDDRTEAYLRVLQQSITPDTNIVVCILSSTRKDKYDAIKKYLCTDCPIPSQCVVARTLSKPQTALAIVTKIALQMNCKMGGELWSVEIPLKQLMIVGIDCYHDTLSGKQSIAGFVASLNEKMTRWFSRCVVQSRGQEIVDGLKACLQTALREWFKWNKYLPSRIIVYRDGVGDGQLNTLVNYEVPQFLDCLKTVGKDYNPRLTVIVVKKRVSTRFFAQAGGGLKNPPPGTVVDIEVTRPEWYDFFIVSQAVRNGCVAPTHYNVVYDTSKLKPDHVQRLTYKLCHMYYNWSGVIRVPAPCQYAHKLAFLVGQSIHREPNLLLSDRLYYL</sequence>
<name>PIWL1_CHICK</name>
<keyword id="KW-0963">Cytoplasm</keyword>
<keyword id="KW-0217">Developmental protein</keyword>
<keyword id="KW-0221">Differentiation</keyword>
<keyword id="KW-0255">Endonuclease</keyword>
<keyword id="KW-0378">Hydrolase</keyword>
<keyword id="KW-0460">Magnesium</keyword>
<keyword id="KW-0469">Meiosis</keyword>
<keyword id="KW-0479">Metal-binding</keyword>
<keyword id="KW-0488">Methylation</keyword>
<keyword id="KW-0540">Nuclease</keyword>
<keyword id="KW-1185">Reference proteome</keyword>
<keyword id="KW-0694">RNA-binding</keyword>
<keyword id="KW-0943">RNA-mediated gene silencing</keyword>
<keyword id="KW-0810">Translation regulation</keyword>
<organism>
    <name type="scientific">Gallus gallus</name>
    <name type="common">Chicken</name>
    <dbReference type="NCBI Taxonomy" id="9031"/>
    <lineage>
        <taxon>Eukaryota</taxon>
        <taxon>Metazoa</taxon>
        <taxon>Chordata</taxon>
        <taxon>Craniata</taxon>
        <taxon>Vertebrata</taxon>
        <taxon>Euteleostomi</taxon>
        <taxon>Archelosauria</taxon>
        <taxon>Archosauria</taxon>
        <taxon>Dinosauria</taxon>
        <taxon>Saurischia</taxon>
        <taxon>Theropoda</taxon>
        <taxon>Coelurosauria</taxon>
        <taxon>Aves</taxon>
        <taxon>Neognathae</taxon>
        <taxon>Galloanserae</taxon>
        <taxon>Galliformes</taxon>
        <taxon>Phasianidae</taxon>
        <taxon>Phasianinae</taxon>
        <taxon>Gallus</taxon>
    </lineage>
</organism>
<reference key="1">
    <citation type="submission" date="2007-05" db="EMBL/GenBank/DDBJ databases">
        <title>Characterization of Piwi-like homolog 1 (Piwi) expression in the developing ovary and testis of chicken (Gallus gallus).</title>
        <authorList>
            <person name="Wang Y."/>
            <person name="Li J."/>
            <person name="Wang C.Y."/>
            <person name="Leung F.C."/>
        </authorList>
    </citation>
    <scope>NUCLEOTIDE SEQUENCE [MRNA]</scope>
    <source>
        <tissue>Testis</tissue>
    </source>
</reference>
<feature type="chain" id="PRO_0000367286" description="Piwi-like protein 1">
    <location>
        <begin position="1"/>
        <end position="867"/>
    </location>
</feature>
<feature type="domain" description="PAZ" evidence="3">
    <location>
        <begin position="286"/>
        <end position="397"/>
    </location>
</feature>
<feature type="domain" description="Piwi" evidence="4">
    <location>
        <begin position="561"/>
        <end position="853"/>
    </location>
</feature>
<feature type="region of interest" description="Disordered" evidence="5">
    <location>
        <begin position="1"/>
        <end position="70"/>
    </location>
</feature>
<feature type="region of interest" description="Required for binding 2'-O-methylated 3'-end of piRNAs" evidence="2">
    <location>
        <begin position="324"/>
        <end position="326"/>
    </location>
</feature>
<feature type="region of interest" description="MID region" evidence="2">
    <location>
        <begin position="485"/>
        <end position="621"/>
    </location>
</feature>
<feature type="compositionally biased region" description="Basic residues" evidence="5">
    <location>
        <begin position="1"/>
        <end position="11"/>
    </location>
</feature>
<feature type="compositionally biased region" description="Polar residues" evidence="5">
    <location>
        <begin position="28"/>
        <end position="44"/>
    </location>
</feature>
<feature type="active site" evidence="1">
    <location>
        <position position="638"/>
    </location>
</feature>
<feature type="active site" evidence="1">
    <location>
        <position position="676"/>
    </location>
</feature>
<feature type="active site" evidence="1">
    <location>
        <position position="708"/>
    </location>
</feature>
<feature type="active site" evidence="1">
    <location>
        <position position="842"/>
    </location>
</feature>